<dbReference type="EC" id="2.3.1.274"/>
<dbReference type="EMBL" id="BX569695">
    <property type="protein sequence ID" value="CAE08762.1"/>
    <property type="molecule type" value="Genomic_DNA"/>
</dbReference>
<dbReference type="RefSeq" id="WP_011129100.1">
    <property type="nucleotide sequence ID" value="NC_005070.1"/>
</dbReference>
<dbReference type="SMR" id="Q7U428"/>
<dbReference type="STRING" id="84588.SYNW2247"/>
<dbReference type="KEGG" id="syw:SYNW2247"/>
<dbReference type="eggNOG" id="COG0416">
    <property type="taxonomic scope" value="Bacteria"/>
</dbReference>
<dbReference type="HOGENOM" id="CLU_039379_0_0_3"/>
<dbReference type="UniPathway" id="UPA00085"/>
<dbReference type="Proteomes" id="UP000001422">
    <property type="component" value="Chromosome"/>
</dbReference>
<dbReference type="GO" id="GO:0005737">
    <property type="term" value="C:cytoplasm"/>
    <property type="evidence" value="ECO:0007669"/>
    <property type="project" value="UniProtKB-SubCell"/>
</dbReference>
<dbReference type="GO" id="GO:0043811">
    <property type="term" value="F:phosphate:acyl-[acyl carrier protein] acyltransferase activity"/>
    <property type="evidence" value="ECO:0007669"/>
    <property type="project" value="UniProtKB-UniRule"/>
</dbReference>
<dbReference type="GO" id="GO:0006633">
    <property type="term" value="P:fatty acid biosynthetic process"/>
    <property type="evidence" value="ECO:0007669"/>
    <property type="project" value="UniProtKB-UniRule"/>
</dbReference>
<dbReference type="GO" id="GO:0008654">
    <property type="term" value="P:phospholipid biosynthetic process"/>
    <property type="evidence" value="ECO:0007669"/>
    <property type="project" value="UniProtKB-KW"/>
</dbReference>
<dbReference type="Gene3D" id="3.40.718.10">
    <property type="entry name" value="Isopropylmalate Dehydrogenase"/>
    <property type="match status" value="1"/>
</dbReference>
<dbReference type="HAMAP" id="MF_00019">
    <property type="entry name" value="PlsX"/>
    <property type="match status" value="1"/>
</dbReference>
<dbReference type="InterPro" id="IPR003664">
    <property type="entry name" value="FA_synthesis"/>
</dbReference>
<dbReference type="InterPro" id="IPR012281">
    <property type="entry name" value="Phospholipid_synth_PlsX-like"/>
</dbReference>
<dbReference type="NCBIfam" id="TIGR00182">
    <property type="entry name" value="plsX"/>
    <property type="match status" value="1"/>
</dbReference>
<dbReference type="NCBIfam" id="NF010419">
    <property type="entry name" value="PRK13845.1"/>
    <property type="match status" value="1"/>
</dbReference>
<dbReference type="PANTHER" id="PTHR30100">
    <property type="entry name" value="FATTY ACID/PHOSPHOLIPID SYNTHESIS PROTEIN PLSX"/>
    <property type="match status" value="1"/>
</dbReference>
<dbReference type="PANTHER" id="PTHR30100:SF1">
    <property type="entry name" value="PHOSPHATE ACYLTRANSFERASE"/>
    <property type="match status" value="1"/>
</dbReference>
<dbReference type="Pfam" id="PF02504">
    <property type="entry name" value="FA_synthesis"/>
    <property type="match status" value="1"/>
</dbReference>
<dbReference type="SUPFAM" id="SSF53659">
    <property type="entry name" value="Isocitrate/Isopropylmalate dehydrogenase-like"/>
    <property type="match status" value="1"/>
</dbReference>
<evidence type="ECO:0000250" key="1"/>
<evidence type="ECO:0000256" key="2">
    <source>
        <dbReference type="SAM" id="MobiDB-lite"/>
    </source>
</evidence>
<evidence type="ECO:0000305" key="3"/>
<comment type="function">
    <text evidence="1">Catalyzes the reversible formation of acyl-phosphate (acyl-PO(4)) from acyl-[acyl-carrier-protein] (acyl-ACP). This enzyme utilizes acyl-ACP as fatty acyl donor, but not acyl-CoA (By similarity).</text>
</comment>
<comment type="catalytic activity">
    <reaction>
        <text>a fatty acyl-[ACP] + phosphate = an acyl phosphate + holo-[ACP]</text>
        <dbReference type="Rhea" id="RHEA:42292"/>
        <dbReference type="Rhea" id="RHEA-COMP:9685"/>
        <dbReference type="Rhea" id="RHEA-COMP:14125"/>
        <dbReference type="ChEBI" id="CHEBI:43474"/>
        <dbReference type="ChEBI" id="CHEBI:59918"/>
        <dbReference type="ChEBI" id="CHEBI:64479"/>
        <dbReference type="ChEBI" id="CHEBI:138651"/>
        <dbReference type="EC" id="2.3.1.274"/>
    </reaction>
</comment>
<comment type="pathway">
    <text>Lipid metabolism; phospholipid metabolism.</text>
</comment>
<comment type="subunit">
    <text evidence="1">Homodimer. Probably interacts with PlsY (By similarity).</text>
</comment>
<comment type="subcellular location">
    <subcellularLocation>
        <location evidence="1">Cytoplasm</location>
    </subcellularLocation>
    <text evidence="1">Associated with the membrane possibly through PlsY.</text>
</comment>
<comment type="similarity">
    <text evidence="3">Belongs to the PlsX family.</text>
</comment>
<feature type="chain" id="PRO_0000189955" description="Phosphate acyltransferase">
    <location>
        <begin position="1"/>
        <end position="428"/>
    </location>
</feature>
<feature type="region of interest" description="Disordered" evidence="2">
    <location>
        <begin position="1"/>
        <end position="20"/>
    </location>
</feature>
<feature type="compositionally biased region" description="Basic and acidic residues" evidence="2">
    <location>
        <begin position="1"/>
        <end position="16"/>
    </location>
</feature>
<gene>
    <name type="primary">plsX</name>
    <name type="ordered locus">SYNW2247</name>
</gene>
<name>PLSX_PARMW</name>
<proteinExistence type="inferred from homology"/>
<reference key="1">
    <citation type="journal article" date="2003" name="Nature">
        <title>The genome of a motile marine Synechococcus.</title>
        <authorList>
            <person name="Palenik B."/>
            <person name="Brahamsha B."/>
            <person name="Larimer F.W."/>
            <person name="Land M.L."/>
            <person name="Hauser L."/>
            <person name="Chain P."/>
            <person name="Lamerdin J.E."/>
            <person name="Regala W."/>
            <person name="Allen E.E."/>
            <person name="McCarren J."/>
            <person name="Paulsen I.T."/>
            <person name="Dufresne A."/>
            <person name="Partensky F."/>
            <person name="Webb E.A."/>
            <person name="Waterbury J."/>
        </authorList>
    </citation>
    <scope>NUCLEOTIDE SEQUENCE [LARGE SCALE GENOMIC DNA]</scope>
    <source>
        <strain>WH8102</strain>
    </source>
</reference>
<protein>
    <recommendedName>
        <fullName>Phosphate acyltransferase</fullName>
        <ecNumber>2.3.1.274</ecNumber>
    </recommendedName>
    <alternativeName>
        <fullName>Acyl-ACP phosphotransacylase</fullName>
    </alternativeName>
    <alternativeName>
        <fullName>Acyl-[acyl-carrier-protein]--phosphate acyltransferase</fullName>
    </alternativeName>
    <alternativeName>
        <fullName>Phosphate-acyl-ACP acyltransferase</fullName>
    </alternativeName>
</protein>
<keyword id="KW-0963">Cytoplasm</keyword>
<keyword id="KW-0444">Lipid biosynthesis</keyword>
<keyword id="KW-0443">Lipid metabolism</keyword>
<keyword id="KW-0594">Phospholipid biosynthesis</keyword>
<keyword id="KW-1208">Phospholipid metabolism</keyword>
<keyword id="KW-0808">Transferase</keyword>
<organism>
    <name type="scientific">Parasynechococcus marenigrum (strain WH8102)</name>
    <dbReference type="NCBI Taxonomy" id="84588"/>
    <lineage>
        <taxon>Bacteria</taxon>
        <taxon>Bacillati</taxon>
        <taxon>Cyanobacteriota</taxon>
        <taxon>Cyanophyceae</taxon>
        <taxon>Synechococcales</taxon>
        <taxon>Prochlorococcaceae</taxon>
        <taxon>Parasynechococcus</taxon>
        <taxon>Parasynechococcus marenigrum</taxon>
    </lineage>
</organism>
<sequence length="428" mass="45589">MPPKDPDSSRTPESRSKSNRPRAIRRLVIWYRRNAAVTSLVDTATSSASAAGTVAGTVANSMLQPLVFDPLRWLQGNTDDEEIQEADRLWVAVDGMGGDHAPGPILEGCLEAIERLPLKIRFVGETDKVLEAADALGLSERLAQAQAADHLDLVASGPSIGMDDEATAVRRKRDASINLAMDLVKKGQALAVYSAGNSGAMMASAIFRLGRLKGIDRPAIGALFPTKDPGQPVLVLDVGANMDCKPAYLHQFALLGNIYSRDVLQVEQPRIGLLNIGEEDCKGNDLALKTHALLRDERRLHFAGNCEGRDVLSGAFDVVVCDGFTGNVLLKFLESVGSVLLGVLRAELPRGRRGKVGSAFLRSNLRRIKKRLDHAEHGGALLLGVNGVAVIGHGSSKALSVVSALRIAHSAASHGVMEDLAALQSGCD</sequence>
<accession>Q7U428</accession>